<gene>
    <name evidence="1" type="primary">rplV</name>
    <name type="ordered locus">MHP7448_0189</name>
</gene>
<comment type="function">
    <text evidence="1">This protein binds specifically to 23S rRNA; its binding is stimulated by other ribosomal proteins, e.g. L4, L17, and L20. It is important during the early stages of 50S assembly. It makes multiple contacts with different domains of the 23S rRNA in the assembled 50S subunit and ribosome (By similarity).</text>
</comment>
<comment type="function">
    <text evidence="1">The globular domain of the protein is located near the polypeptide exit tunnel on the outside of the subunit, while an extended beta-hairpin is found that lines the wall of the exit tunnel in the center of the 70S ribosome.</text>
</comment>
<comment type="subunit">
    <text evidence="1">Part of the 50S ribosomal subunit.</text>
</comment>
<comment type="similarity">
    <text evidence="1">Belongs to the universal ribosomal protein uL22 family.</text>
</comment>
<accession>Q4A8H6</accession>
<dbReference type="EMBL" id="AE017244">
    <property type="protein sequence ID" value="AAZ53563.2"/>
    <property type="molecule type" value="Genomic_DNA"/>
</dbReference>
<dbReference type="RefSeq" id="WP_041361593.1">
    <property type="nucleotide sequence ID" value="NC_007332.1"/>
</dbReference>
<dbReference type="SMR" id="Q4A8H6"/>
<dbReference type="KEGG" id="mhp:MHP7448_0189"/>
<dbReference type="HOGENOM" id="CLU_1545931_0_0_14"/>
<dbReference type="Proteomes" id="UP000000553">
    <property type="component" value="Chromosome"/>
</dbReference>
<dbReference type="GO" id="GO:0022625">
    <property type="term" value="C:cytosolic large ribosomal subunit"/>
    <property type="evidence" value="ECO:0007669"/>
    <property type="project" value="TreeGrafter"/>
</dbReference>
<dbReference type="GO" id="GO:0019843">
    <property type="term" value="F:rRNA binding"/>
    <property type="evidence" value="ECO:0007669"/>
    <property type="project" value="UniProtKB-UniRule"/>
</dbReference>
<dbReference type="GO" id="GO:0003735">
    <property type="term" value="F:structural constituent of ribosome"/>
    <property type="evidence" value="ECO:0007669"/>
    <property type="project" value="InterPro"/>
</dbReference>
<dbReference type="GO" id="GO:0006412">
    <property type="term" value="P:translation"/>
    <property type="evidence" value="ECO:0007669"/>
    <property type="project" value="UniProtKB-UniRule"/>
</dbReference>
<dbReference type="CDD" id="cd00336">
    <property type="entry name" value="Ribosomal_L22"/>
    <property type="match status" value="1"/>
</dbReference>
<dbReference type="Gene3D" id="3.90.470.10">
    <property type="entry name" value="Ribosomal protein L22/L17"/>
    <property type="match status" value="1"/>
</dbReference>
<dbReference type="HAMAP" id="MF_01331_B">
    <property type="entry name" value="Ribosomal_uL22_B"/>
    <property type="match status" value="1"/>
</dbReference>
<dbReference type="InterPro" id="IPR001063">
    <property type="entry name" value="Ribosomal_uL22"/>
</dbReference>
<dbReference type="InterPro" id="IPR005727">
    <property type="entry name" value="Ribosomal_uL22_bac/chlpt-type"/>
</dbReference>
<dbReference type="InterPro" id="IPR047867">
    <property type="entry name" value="Ribosomal_uL22_bac/org-type"/>
</dbReference>
<dbReference type="InterPro" id="IPR036394">
    <property type="entry name" value="Ribosomal_uL22_sf"/>
</dbReference>
<dbReference type="NCBIfam" id="TIGR01044">
    <property type="entry name" value="rplV_bact"/>
    <property type="match status" value="1"/>
</dbReference>
<dbReference type="PANTHER" id="PTHR13501">
    <property type="entry name" value="CHLOROPLAST 50S RIBOSOMAL PROTEIN L22-RELATED"/>
    <property type="match status" value="1"/>
</dbReference>
<dbReference type="PANTHER" id="PTHR13501:SF8">
    <property type="entry name" value="LARGE RIBOSOMAL SUBUNIT PROTEIN UL22M"/>
    <property type="match status" value="1"/>
</dbReference>
<dbReference type="Pfam" id="PF00237">
    <property type="entry name" value="Ribosomal_L22"/>
    <property type="match status" value="1"/>
</dbReference>
<dbReference type="SUPFAM" id="SSF54843">
    <property type="entry name" value="Ribosomal protein L22"/>
    <property type="match status" value="1"/>
</dbReference>
<sequence>MKLENHNLAVASLKTQRISAFKARLVAVLLKGKKVSDALAILAHTKKKASPIFTKLINSAVANAINNHGFEHSNLIIKAAIVNEGPTLKRFRPRAKGAASQILKRTSHFKVILVSQNGGESQNQEYQETEKNLVTKSPENTQSGALSQQSQAEQPQNDPENGVDSQLSAKTNSTTTAKKTDLADNSTKNDATNTVLAQEKEVK</sequence>
<keyword id="KW-0687">Ribonucleoprotein</keyword>
<keyword id="KW-0689">Ribosomal protein</keyword>
<keyword id="KW-0694">RNA-binding</keyword>
<keyword id="KW-0699">rRNA-binding</keyword>
<organism>
    <name type="scientific">Mesomycoplasma hyopneumoniae (strain 7448)</name>
    <name type="common">Mycoplasma hyopneumoniae</name>
    <dbReference type="NCBI Taxonomy" id="262722"/>
    <lineage>
        <taxon>Bacteria</taxon>
        <taxon>Bacillati</taxon>
        <taxon>Mycoplasmatota</taxon>
        <taxon>Mycoplasmoidales</taxon>
        <taxon>Metamycoplasmataceae</taxon>
        <taxon>Mesomycoplasma</taxon>
    </lineage>
</organism>
<evidence type="ECO:0000255" key="1">
    <source>
        <dbReference type="HAMAP-Rule" id="MF_01331"/>
    </source>
</evidence>
<evidence type="ECO:0000256" key="2">
    <source>
        <dbReference type="SAM" id="MobiDB-lite"/>
    </source>
</evidence>
<evidence type="ECO:0000305" key="3"/>
<name>RL22_MESH7</name>
<feature type="chain" id="PRO_0000243171" description="Large ribosomal subunit protein uL22">
    <location>
        <begin position="1"/>
        <end position="203"/>
    </location>
</feature>
<feature type="region of interest" description="Disordered" evidence="2">
    <location>
        <begin position="138"/>
        <end position="203"/>
    </location>
</feature>
<feature type="compositionally biased region" description="Polar residues" evidence="2">
    <location>
        <begin position="138"/>
        <end position="167"/>
    </location>
</feature>
<feature type="compositionally biased region" description="Low complexity" evidence="2">
    <location>
        <begin position="168"/>
        <end position="177"/>
    </location>
</feature>
<feature type="compositionally biased region" description="Polar residues" evidence="2">
    <location>
        <begin position="183"/>
        <end position="196"/>
    </location>
</feature>
<reference key="1">
    <citation type="journal article" date="2005" name="J. Bacteriol.">
        <title>Swine and poultry pathogens: the complete genome sequences of two strains of Mycoplasma hyopneumoniae and a strain of Mycoplasma synoviae.</title>
        <authorList>
            <person name="Vasconcelos A.T.R."/>
            <person name="Ferreira H.B."/>
            <person name="Bizarro C.V."/>
            <person name="Bonatto S.L."/>
            <person name="Carvalho M.O."/>
            <person name="Pinto P.M."/>
            <person name="Almeida D.F."/>
            <person name="Almeida L.G.P."/>
            <person name="Almeida R."/>
            <person name="Alves-Junior L."/>
            <person name="Assuncao E.N."/>
            <person name="Azevedo V.A.C."/>
            <person name="Bogo M.R."/>
            <person name="Brigido M.M."/>
            <person name="Brocchi M."/>
            <person name="Burity H.A."/>
            <person name="Camargo A.A."/>
            <person name="Camargo S.S."/>
            <person name="Carepo M.S."/>
            <person name="Carraro D.M."/>
            <person name="de Mattos Cascardo J.C."/>
            <person name="Castro L.A."/>
            <person name="Cavalcanti G."/>
            <person name="Chemale G."/>
            <person name="Collevatti R.G."/>
            <person name="Cunha C.W."/>
            <person name="Dallagiovanna B."/>
            <person name="Dambros B.P."/>
            <person name="Dellagostin O.A."/>
            <person name="Falcao C."/>
            <person name="Fantinatti-Garboggini F."/>
            <person name="Felipe M.S.S."/>
            <person name="Fiorentin L."/>
            <person name="Franco G.R."/>
            <person name="Freitas N.S.A."/>
            <person name="Frias D."/>
            <person name="Grangeiro T.B."/>
            <person name="Grisard E.C."/>
            <person name="Guimaraes C.T."/>
            <person name="Hungria M."/>
            <person name="Jardim S.N."/>
            <person name="Krieger M.A."/>
            <person name="Laurino J.P."/>
            <person name="Lima L.F.A."/>
            <person name="Lopes M.I."/>
            <person name="Loreto E.L.S."/>
            <person name="Madeira H.M.F."/>
            <person name="Manfio G.P."/>
            <person name="Maranhao A.Q."/>
            <person name="Martinkovics C.T."/>
            <person name="Medeiros S.R.B."/>
            <person name="Moreira M.A.M."/>
            <person name="Neiva M."/>
            <person name="Ramalho-Neto C.E."/>
            <person name="Nicolas M.F."/>
            <person name="Oliveira S.C."/>
            <person name="Paixao R.F.C."/>
            <person name="Pedrosa F.O."/>
            <person name="Pena S.D.J."/>
            <person name="Pereira M."/>
            <person name="Pereira-Ferrari L."/>
            <person name="Piffer I."/>
            <person name="Pinto L.S."/>
            <person name="Potrich D.P."/>
            <person name="Salim A.C.M."/>
            <person name="Santos F.R."/>
            <person name="Schmitt R."/>
            <person name="Schneider M.P.C."/>
            <person name="Schrank A."/>
            <person name="Schrank I.S."/>
            <person name="Schuck A.F."/>
            <person name="Seuanez H.N."/>
            <person name="Silva D.W."/>
            <person name="Silva R."/>
            <person name="Silva S.C."/>
            <person name="Soares C.M.A."/>
            <person name="Souza K.R.L."/>
            <person name="Souza R.C."/>
            <person name="Staats C.C."/>
            <person name="Steffens M.B.R."/>
            <person name="Teixeira S.M.R."/>
            <person name="Urmenyi T.P."/>
            <person name="Vainstein M.H."/>
            <person name="Zuccherato L.W."/>
            <person name="Simpson A.J.G."/>
            <person name="Zaha A."/>
        </authorList>
    </citation>
    <scope>NUCLEOTIDE SEQUENCE [LARGE SCALE GENOMIC DNA]</scope>
    <source>
        <strain>7448</strain>
    </source>
</reference>
<protein>
    <recommendedName>
        <fullName evidence="1">Large ribosomal subunit protein uL22</fullName>
    </recommendedName>
    <alternativeName>
        <fullName evidence="3">50S ribosomal protein L22</fullName>
    </alternativeName>
</protein>
<proteinExistence type="inferred from homology"/>